<dbReference type="EMBL" id="U44978">
    <property type="protein sequence ID" value="AAC40230.1"/>
    <property type="molecule type" value="Genomic_DNA"/>
</dbReference>
<dbReference type="EMBL" id="U44978">
    <property type="protein sequence ID" value="AAC40231.1"/>
    <property type="molecule type" value="Genomic_DNA"/>
</dbReference>
<dbReference type="SMR" id="P52501"/>
<dbReference type="Proteomes" id="UP000000468">
    <property type="component" value="Genome"/>
</dbReference>
<dbReference type="GO" id="GO:0043657">
    <property type="term" value="C:host cell"/>
    <property type="evidence" value="ECO:0007669"/>
    <property type="project" value="GOC"/>
</dbReference>
<dbReference type="GO" id="GO:0042025">
    <property type="term" value="C:host cell nucleus"/>
    <property type="evidence" value="ECO:0007669"/>
    <property type="project" value="UniProtKB-SubCell"/>
</dbReference>
<dbReference type="GO" id="GO:0039615">
    <property type="term" value="C:T=1 icosahedral viral capsid"/>
    <property type="evidence" value="ECO:0007669"/>
    <property type="project" value="UniProtKB-KW"/>
</dbReference>
<dbReference type="GO" id="GO:0046872">
    <property type="term" value="F:metal ion binding"/>
    <property type="evidence" value="ECO:0007669"/>
    <property type="project" value="UniProtKB-KW"/>
</dbReference>
<dbReference type="GO" id="GO:0005198">
    <property type="term" value="F:structural molecule activity"/>
    <property type="evidence" value="ECO:0007669"/>
    <property type="project" value="InterPro"/>
</dbReference>
<dbReference type="GO" id="GO:0075512">
    <property type="term" value="P:clathrin-dependent endocytosis of virus by host cell"/>
    <property type="evidence" value="ECO:0007669"/>
    <property type="project" value="UniProtKB-KW"/>
</dbReference>
<dbReference type="GO" id="GO:0075521">
    <property type="term" value="P:microtubule-dependent intracellular transport of viral material towards nucleus"/>
    <property type="evidence" value="ECO:0007669"/>
    <property type="project" value="UniProtKB-KW"/>
</dbReference>
<dbReference type="GO" id="GO:0140267">
    <property type="term" value="P:symbiont entry into host cell via permeabilization of host membrane"/>
    <property type="evidence" value="ECO:0007669"/>
    <property type="project" value="UniProtKB-KW"/>
</dbReference>
<dbReference type="GO" id="GO:0075732">
    <property type="term" value="P:viral penetration into host nucleus"/>
    <property type="evidence" value="ECO:0007669"/>
    <property type="project" value="UniProtKB-KW"/>
</dbReference>
<dbReference type="GO" id="GO:0019062">
    <property type="term" value="P:virion attachment to host cell"/>
    <property type="evidence" value="ECO:0007669"/>
    <property type="project" value="UniProtKB-KW"/>
</dbReference>
<dbReference type="Gene3D" id="2.170.30.10">
    <property type="entry name" value="Parvovirus coat protein VP1/VP2"/>
    <property type="match status" value="1"/>
</dbReference>
<dbReference type="InterPro" id="IPR016184">
    <property type="entry name" value="Capsid/spike_ssDNA_virus"/>
</dbReference>
<dbReference type="InterPro" id="IPR001403">
    <property type="entry name" value="Parvovirus_coat"/>
</dbReference>
<dbReference type="InterPro" id="IPR013607">
    <property type="entry name" value="Phospholipase_A2-like"/>
</dbReference>
<dbReference type="InterPro" id="IPR036952">
    <property type="entry name" value="VP1/VP2"/>
</dbReference>
<dbReference type="Pfam" id="PF00740">
    <property type="entry name" value="Parvo_coat"/>
    <property type="match status" value="1"/>
</dbReference>
<dbReference type="Pfam" id="PF08398">
    <property type="entry name" value="Phospholip_A2_4"/>
    <property type="match status" value="1"/>
</dbReference>
<dbReference type="SUPFAM" id="SSF88645">
    <property type="entry name" value="ssDNA viruses"/>
    <property type="match status" value="1"/>
</dbReference>
<reference key="1">
    <citation type="journal article" date="1996" name="J. Virol.">
        <title>Genome organization of the Kresse strain of porcine parvovirus: identification of the allotropic determinant and comparison with those of NADL-2 and field isolates.</title>
        <authorList>
            <person name="Bergeron J."/>
            <person name="Hebert B."/>
            <person name="Tijssen P."/>
        </authorList>
    </citation>
    <scope>NUCLEOTIDE SEQUENCE [GENOMIC DNA]</scope>
</reference>
<sequence>MAPPAKRARGLTLPGYKYLGPGNSLDQGEPTNPSDAAAKEHDEAYDKYIKSGKNPYFYFSAADEKFIKETEHAKDYGGKIGHYFFRAKRAFAPKLSETDSPTTSQQPEVRRSPRKHPGSKPPGKRPAPRHIFINLAKKKAKGTSNTNSNSMSENVEQHNPINAGTELSATGNESGGGGGGGGGRGAGGVGVSTGSFNNQTEFQYLGEGLVRITAHASRLIHLNMPEHETYKRIHVLNSESGVAGQMVQDDAHTQMVTPWSLIDANAWGVWFNPADWQLISNNMTEINLVSFEQEIFNVVLKTITESATSPPTKIYNNDLTASLMVALDTNNTLPYTPAAPRSETLGFYPWLPTKPTQYRYYLSCTRNLNPPTYTGQSQQITDSIQTGLHSDIMFYTIENAVPIHLLRTGDEFSTGIYHFDTKPLKLTHSWQTNRSLGLPPKLLTEPTTEGDQHPGTLPAANTRKGYHQTINNSYTEATAIRPAQVGYNTPYMNFEYSNGGPFLTPIVPTADTQYNDDEPNGAIRFTMGYQHGQLTTSSQELERYTFNPQSKCGRAPKQQFNQQAPLNLENTNNGTLLPSDPIGGKPNMHFMNTLNTYGPLTALNNTAPVFPNGQIWDKELDTDLKPRLHVTAPFVCKNNPPGQLFVKIAPNLTDDFNADSPQQPRIITYSNFWWKGTLTFTAKMRSSNMWNPIQQHTTTAENIGNYIPTNIGGIKMFPEYSQLIPRKLY</sequence>
<feature type="chain" id="PRO_0000039435" description="Capsid protein VP1">
    <location>
        <begin position="1"/>
        <end position="729"/>
    </location>
</feature>
<feature type="region of interest" description="Disordered" evidence="3">
    <location>
        <begin position="1"/>
        <end position="37"/>
    </location>
</feature>
<feature type="region of interest" description="Phospholipase A2-like" evidence="1">
    <location>
        <begin position="18"/>
        <end position="63"/>
    </location>
</feature>
<feature type="region of interest" description="Disordered" evidence="3">
    <location>
        <begin position="94"/>
        <end position="129"/>
    </location>
</feature>
<feature type="region of interest" description="Disordered" evidence="3">
    <location>
        <begin position="163"/>
        <end position="186"/>
    </location>
</feature>
<feature type="region of interest" description="Disordered" evidence="3">
    <location>
        <begin position="437"/>
        <end position="465"/>
    </location>
</feature>
<feature type="short sequence motif" description="Nuclear localization signal" evidence="2">
    <location>
        <begin position="4"/>
        <end position="12"/>
    </location>
</feature>
<feature type="compositionally biased region" description="Polar residues" evidence="3">
    <location>
        <begin position="24"/>
        <end position="34"/>
    </location>
</feature>
<feature type="compositionally biased region" description="Polar residues" evidence="3">
    <location>
        <begin position="98"/>
        <end position="107"/>
    </location>
</feature>
<feature type="compositionally biased region" description="Basic residues" evidence="3">
    <location>
        <begin position="112"/>
        <end position="128"/>
    </location>
</feature>
<feature type="compositionally biased region" description="Gly residues" evidence="3">
    <location>
        <begin position="173"/>
        <end position="186"/>
    </location>
</feature>
<feature type="binding site" evidence="1">
    <location>
        <position position="330"/>
    </location>
    <ligand>
        <name>Mg(2+)</name>
        <dbReference type="ChEBI" id="CHEBI:18420"/>
        <label>1</label>
    </ligand>
</feature>
<feature type="splice variant" id="VSP_041143" description="In isoform VP2." evidence="4">
    <location>
        <begin position="1"/>
        <end position="150"/>
    </location>
</feature>
<keyword id="KW-0025">Alternative splicing</keyword>
<keyword id="KW-0167">Capsid protein</keyword>
<keyword id="KW-1165">Clathrin-mediated endocytosis of virus by host</keyword>
<keyword id="KW-1176">Cytoplasmic inwards viral transport</keyword>
<keyword id="KW-1048">Host nucleus</keyword>
<keyword id="KW-0945">Host-virus interaction</keyword>
<keyword id="KW-0460">Magnesium</keyword>
<keyword id="KW-0479">Metal-binding</keyword>
<keyword id="KW-1177">Microtubular inwards viral transport</keyword>
<keyword id="KW-1140">T=1 icosahedral capsid protein</keyword>
<keyword id="KW-1161">Viral attachment to host cell</keyword>
<keyword id="KW-1162">Viral penetration into host cytoplasm</keyword>
<keyword id="KW-1163">Viral penetration into host nucleus</keyword>
<keyword id="KW-1173">Viral penetration via permeabilization of host membrane</keyword>
<keyword id="KW-0946">Virion</keyword>
<keyword id="KW-1164">Virus endocytosis by host</keyword>
<keyword id="KW-1160">Virus entry into host cell</keyword>
<proteinExistence type="inferred from homology"/>
<protein>
    <recommendedName>
        <fullName>Capsid protein VP1</fullName>
    </recommendedName>
    <alternativeName>
        <fullName>Coat protein VP1</fullName>
    </alternativeName>
</protein>
<comment type="function">
    <text evidence="1">Capsid protein self-assembles to form an icosahedral capsid with a T=1 symmetry, about 22 nm in diameter, and consisting of 60 copies of two size variants of the capsid proteins, VP1 and VP2, which differ by the presence of an N-terminal extension in the minor protein VP1. The capsid encapsulates the genomic ssDNA. Capsid proteins are responsible for the attachment to host cell receptors. This attachment induces virion internalization predominantly through clathrin-dependent endocytosis. Binding to the host receptors also induces capsid rearrangements leading to surface exposure of VP1 N-terminus, specifically its phospholipase A2-like region and putative nuclear localization signal(s). VP1 N-terminus might serve as a lipolytic enzyme to breach the endosomal membrane during entry into host cell and might contribute to virus transport to the nucleus (By similarity).</text>
</comment>
<comment type="subcellular location">
    <subcellularLocation>
        <location evidence="1">Virion</location>
    </subcellularLocation>
    <subcellularLocation>
        <location evidence="4">Host nucleus</location>
    </subcellularLocation>
</comment>
<comment type="alternative products">
    <event type="alternative splicing"/>
    <isoform>
        <id>P52501-1</id>
        <name>VP1</name>
        <sequence type="displayed"/>
    </isoform>
    <isoform>
        <id>P52501-2</id>
        <name>VP2</name>
        <sequence type="described" ref="VSP_041143"/>
    </isoform>
</comment>
<comment type="domain">
    <text>The N-terminus of VP1 is sequestered within the mature capsid. It contains a phospholipase A2-like region and putative nuclear localization signals.</text>
</comment>
<comment type="miscellaneous">
    <text>VP3 might be a post-translational cleavage product of VP2 in several autonomous parvoviruses.</text>
</comment>
<comment type="miscellaneous">
    <molecule>Isoform VP1</molecule>
    <text>Minor splicing isoform.</text>
</comment>
<comment type="miscellaneous">
    <molecule>Isoform VP2</molecule>
    <text evidence="4">Major splicing isoform produced by deletion of the initiating AUG for VP1 and downstream translation of VP2.</text>
</comment>
<comment type="similarity">
    <text evidence="4">Belongs to the parvoviridae capsid protein family.</text>
</comment>
<organismHost>
    <name type="scientific">Sus scrofa</name>
    <name type="common">Pig</name>
    <dbReference type="NCBI Taxonomy" id="9823"/>
</organismHost>
<name>CAPSD_PAVPK</name>
<evidence type="ECO:0000250" key="1"/>
<evidence type="ECO:0000255" key="2"/>
<evidence type="ECO:0000256" key="3">
    <source>
        <dbReference type="SAM" id="MobiDB-lite"/>
    </source>
</evidence>
<evidence type="ECO:0000305" key="4"/>
<accession>P52501</accession>
<organism>
    <name type="scientific">Porcine parvovirus (strain Kresse)</name>
    <name type="common">PPV</name>
    <dbReference type="NCBI Taxonomy" id="73487"/>
    <lineage>
        <taxon>Viruses</taxon>
        <taxon>Monodnaviria</taxon>
        <taxon>Shotokuvirae</taxon>
        <taxon>Cossaviricota</taxon>
        <taxon>Quintoviricetes</taxon>
        <taxon>Piccovirales</taxon>
        <taxon>Parvoviridae</taxon>
        <taxon>Parvovirinae</taxon>
        <taxon>Protoparvovirus</taxon>
        <taxon>Protoparvovirus ungulate1</taxon>
    </lineage>
</organism>